<reference key="1">
    <citation type="journal article" date="2009" name="PLoS Genet.">
        <title>Organised genome dynamics in the Escherichia coli species results in highly diverse adaptive paths.</title>
        <authorList>
            <person name="Touchon M."/>
            <person name="Hoede C."/>
            <person name="Tenaillon O."/>
            <person name="Barbe V."/>
            <person name="Baeriswyl S."/>
            <person name="Bidet P."/>
            <person name="Bingen E."/>
            <person name="Bonacorsi S."/>
            <person name="Bouchier C."/>
            <person name="Bouvet O."/>
            <person name="Calteau A."/>
            <person name="Chiapello H."/>
            <person name="Clermont O."/>
            <person name="Cruveiller S."/>
            <person name="Danchin A."/>
            <person name="Diard M."/>
            <person name="Dossat C."/>
            <person name="Karoui M.E."/>
            <person name="Frapy E."/>
            <person name="Garry L."/>
            <person name="Ghigo J.M."/>
            <person name="Gilles A.M."/>
            <person name="Johnson J."/>
            <person name="Le Bouguenec C."/>
            <person name="Lescat M."/>
            <person name="Mangenot S."/>
            <person name="Martinez-Jehanne V."/>
            <person name="Matic I."/>
            <person name="Nassif X."/>
            <person name="Oztas S."/>
            <person name="Petit M.A."/>
            <person name="Pichon C."/>
            <person name="Rouy Z."/>
            <person name="Ruf C.S."/>
            <person name="Schneider D."/>
            <person name="Tourret J."/>
            <person name="Vacherie B."/>
            <person name="Vallenet D."/>
            <person name="Medigue C."/>
            <person name="Rocha E.P.C."/>
            <person name="Denamur E."/>
        </authorList>
    </citation>
    <scope>NUCLEOTIDE SEQUENCE [LARGE SCALE GENOMIC DNA]</scope>
    <source>
        <strain>ED1a</strain>
    </source>
</reference>
<gene>
    <name evidence="1" type="primary">rsxA</name>
    <name type="ordered locus">ECED1_1828</name>
</gene>
<feature type="chain" id="PRO_1000191724" description="Ion-translocating oxidoreductase complex subunit A">
    <location>
        <begin position="1"/>
        <end position="193"/>
    </location>
</feature>
<feature type="transmembrane region" description="Helical" evidence="1">
    <location>
        <begin position="5"/>
        <end position="25"/>
    </location>
</feature>
<feature type="transmembrane region" description="Helical" evidence="1">
    <location>
        <begin position="39"/>
        <end position="59"/>
    </location>
</feature>
<feature type="transmembrane region" description="Helical" evidence="1">
    <location>
        <begin position="63"/>
        <end position="83"/>
    </location>
</feature>
<feature type="transmembrane region" description="Helical" evidence="1">
    <location>
        <begin position="102"/>
        <end position="122"/>
    </location>
</feature>
<feature type="transmembrane region" description="Helical" evidence="1">
    <location>
        <begin position="134"/>
        <end position="154"/>
    </location>
</feature>
<feature type="transmembrane region" description="Helical" evidence="1">
    <location>
        <begin position="171"/>
        <end position="191"/>
    </location>
</feature>
<name>RSXA_ECO81</name>
<organism>
    <name type="scientific">Escherichia coli O81 (strain ED1a)</name>
    <dbReference type="NCBI Taxonomy" id="585397"/>
    <lineage>
        <taxon>Bacteria</taxon>
        <taxon>Pseudomonadati</taxon>
        <taxon>Pseudomonadota</taxon>
        <taxon>Gammaproteobacteria</taxon>
        <taxon>Enterobacterales</taxon>
        <taxon>Enterobacteriaceae</taxon>
        <taxon>Escherichia</taxon>
    </lineage>
</organism>
<sequence>MTDYLLLFVGTVLVNNFVLVKFLGLCPFMGVSKKLETAMGMGLATTFVMTLASICAWLIDTWILIPLNLIYLRTLAFILVIAVVVQFTEMVVRKTSPVLYRLLGIFLPLITTNCAVLGVALLNINLGHNFLQSALYGFSAAVGFSLVMVLFAAIRERLAVADVPAPFRGNAIALITAGLMSLAFMGFSGLVKL</sequence>
<comment type="function">
    <text evidence="1">Part of a membrane-bound complex that couples electron transfer with translocation of ions across the membrane. Required to maintain the reduced state of SoxR.</text>
</comment>
<comment type="subunit">
    <text evidence="1">The complex is composed of six subunits: RsxA, RsxB, RsxC, RsxD, RsxE and RsxG.</text>
</comment>
<comment type="subcellular location">
    <subcellularLocation>
        <location evidence="1">Cell inner membrane</location>
        <topology evidence="1">Multi-pass membrane protein</topology>
    </subcellularLocation>
</comment>
<comment type="similarity">
    <text evidence="1">Belongs to the NqrDE/RnfAE family.</text>
</comment>
<keyword id="KW-0997">Cell inner membrane</keyword>
<keyword id="KW-1003">Cell membrane</keyword>
<keyword id="KW-0249">Electron transport</keyword>
<keyword id="KW-0472">Membrane</keyword>
<keyword id="KW-1278">Translocase</keyword>
<keyword id="KW-0812">Transmembrane</keyword>
<keyword id="KW-1133">Transmembrane helix</keyword>
<keyword id="KW-0813">Transport</keyword>
<proteinExistence type="inferred from homology"/>
<protein>
    <recommendedName>
        <fullName evidence="1">Ion-translocating oxidoreductase complex subunit A</fullName>
        <ecNumber evidence="1">7.-.-.-</ecNumber>
    </recommendedName>
    <alternativeName>
        <fullName evidence="1">Rsx electron transport complex subunit A</fullName>
    </alternativeName>
</protein>
<accession>B7MVA5</accession>
<dbReference type="EC" id="7.-.-.-" evidence="1"/>
<dbReference type="EMBL" id="CU928162">
    <property type="protein sequence ID" value="CAR08021.2"/>
    <property type="molecule type" value="Genomic_DNA"/>
</dbReference>
<dbReference type="RefSeq" id="WP_000133193.1">
    <property type="nucleotide sequence ID" value="NC_011745.1"/>
</dbReference>
<dbReference type="SMR" id="B7MVA5"/>
<dbReference type="GeneID" id="89516393"/>
<dbReference type="KEGG" id="ecq:ECED1_1828"/>
<dbReference type="HOGENOM" id="CLU_095255_1_0_6"/>
<dbReference type="Proteomes" id="UP000000748">
    <property type="component" value="Chromosome"/>
</dbReference>
<dbReference type="GO" id="GO:0005886">
    <property type="term" value="C:plasma membrane"/>
    <property type="evidence" value="ECO:0007669"/>
    <property type="project" value="UniProtKB-SubCell"/>
</dbReference>
<dbReference type="GO" id="GO:0022900">
    <property type="term" value="P:electron transport chain"/>
    <property type="evidence" value="ECO:0007669"/>
    <property type="project" value="UniProtKB-UniRule"/>
</dbReference>
<dbReference type="HAMAP" id="MF_00459">
    <property type="entry name" value="RsxA_RnfA"/>
    <property type="match status" value="1"/>
</dbReference>
<dbReference type="InterPro" id="IPR011293">
    <property type="entry name" value="Ion_transpt_RnfA/RsxA"/>
</dbReference>
<dbReference type="InterPro" id="IPR003667">
    <property type="entry name" value="NqrDE/RnfAE"/>
</dbReference>
<dbReference type="InterPro" id="IPR050133">
    <property type="entry name" value="NqrDE/RnfAE_oxidrdctase"/>
</dbReference>
<dbReference type="NCBIfam" id="NF003481">
    <property type="entry name" value="PRK05151.1"/>
    <property type="match status" value="1"/>
</dbReference>
<dbReference type="NCBIfam" id="TIGR01943">
    <property type="entry name" value="rnfA"/>
    <property type="match status" value="1"/>
</dbReference>
<dbReference type="PANTHER" id="PTHR30335">
    <property type="entry name" value="INTEGRAL MEMBRANE PROTEIN OF SOXR-REDUCING COMPLEX"/>
    <property type="match status" value="1"/>
</dbReference>
<dbReference type="PANTHER" id="PTHR30335:SF0">
    <property type="entry name" value="ION-TRANSLOCATING OXIDOREDUCTASE COMPLEX SUBUNIT A"/>
    <property type="match status" value="1"/>
</dbReference>
<dbReference type="Pfam" id="PF02508">
    <property type="entry name" value="Rnf-Nqr"/>
    <property type="match status" value="1"/>
</dbReference>
<dbReference type="PIRSF" id="PIRSF006102">
    <property type="entry name" value="NQR_DE"/>
    <property type="match status" value="1"/>
</dbReference>
<evidence type="ECO:0000255" key="1">
    <source>
        <dbReference type="HAMAP-Rule" id="MF_00459"/>
    </source>
</evidence>